<evidence type="ECO:0000255" key="1">
    <source>
        <dbReference type="HAMAP-Rule" id="MF_00420"/>
    </source>
</evidence>
<sequence>MTEPEITPELIAAHGLKPDEYQRILEIIGRAPTFTELGIFSAMWNEHCSYKSSKKWLRTLPTTGPQVICGPGENAGVVDIGDGQAVIFKMESHNHPSYIEPYQGAATGVGGILRDVFTMGARPIAAMNALSFGVPDHPKTAHIVKGVVEGIGGYGNAFGVPTVGGEVRFHRAYNGNCLVNAFAAGLADADRIFYSAASGVGMPVVYLGAKTGRDGVGGATMASAEFDDTIEEKRPTVQVGDPFTEKRLLEACLELMASDSVISIQDMGAAGLTCSAVEMGDKGDLGIRLQLDAVPQREANMTAYEMMLSESQERMLMVLKPEKEAVARAIFEKWDLDFAIVGETIPEDRFLILHGNEVKADLPLKALSGTAPEYDRPWIETPAAAPLGAVPEVDPIEGLKALIGSPSYAHKAWVWEQYDSQVMADTVRAPGLGAGVVRVHGTPKALAFTSDVTPRYVKANPFEGGKQAVAEAYRNLTAVGAKPLATTDNMNFGNPEKPEIMGQFVGAIKGIGAAVAALDMPIVSGNVSLYNETDGVGILPTPTIGAVGLLTSLDELIAGQPEEGDLALVIGTTAGHLGQSALLAEMFGREEGDAPPVDLEAEKRHGEFLRANRKLVRAAADLSDGGLALAAFEMAEAAGLGLTLTPSGTAALFGEDQARYLVACAPDRAEALQAAAEAAGVPLQEVGRFGGATVTLAGASAPLADLSRLYRRAFAEAIGG</sequence>
<organism>
    <name type="scientific">Cereibacter sphaeroides (strain ATCC 17023 / DSM 158 / JCM 6121 / CCUG 31486 / LMG 2827 / NBRC 12203 / NCIMB 8253 / ATH 2.4.1.)</name>
    <name type="common">Rhodobacter sphaeroides</name>
    <dbReference type="NCBI Taxonomy" id="272943"/>
    <lineage>
        <taxon>Bacteria</taxon>
        <taxon>Pseudomonadati</taxon>
        <taxon>Pseudomonadota</taxon>
        <taxon>Alphaproteobacteria</taxon>
        <taxon>Rhodobacterales</taxon>
        <taxon>Paracoccaceae</taxon>
        <taxon>Cereibacter</taxon>
    </lineage>
</organism>
<name>PURL_CERS4</name>
<accession>Q3J273</accession>
<feature type="chain" id="PRO_0000236662" description="Phosphoribosylformylglycinamidine synthase subunit PurL">
    <location>
        <begin position="1"/>
        <end position="720"/>
    </location>
</feature>
<feature type="active site" evidence="1">
    <location>
        <position position="47"/>
    </location>
</feature>
<feature type="active site" description="Proton acceptor" evidence="1">
    <location>
        <position position="93"/>
    </location>
</feature>
<feature type="binding site" evidence="1">
    <location>
        <position position="50"/>
    </location>
    <ligand>
        <name>ATP</name>
        <dbReference type="ChEBI" id="CHEBI:30616"/>
    </ligand>
</feature>
<feature type="binding site" evidence="1">
    <location>
        <position position="89"/>
    </location>
    <ligand>
        <name>ATP</name>
        <dbReference type="ChEBI" id="CHEBI:30616"/>
    </ligand>
</feature>
<feature type="binding site" evidence="1">
    <location>
        <position position="91"/>
    </location>
    <ligand>
        <name>Mg(2+)</name>
        <dbReference type="ChEBI" id="CHEBI:18420"/>
        <label>1</label>
    </ligand>
</feature>
<feature type="binding site" evidence="1">
    <location>
        <begin position="92"/>
        <end position="95"/>
    </location>
    <ligand>
        <name>substrate</name>
    </ligand>
</feature>
<feature type="binding site" evidence="1">
    <location>
        <position position="114"/>
    </location>
    <ligand>
        <name>substrate</name>
    </ligand>
</feature>
<feature type="binding site" evidence="1">
    <location>
        <position position="115"/>
    </location>
    <ligand>
        <name>Mg(2+)</name>
        <dbReference type="ChEBI" id="CHEBI:18420"/>
        <label>2</label>
    </ligand>
</feature>
<feature type="binding site" evidence="1">
    <location>
        <position position="238"/>
    </location>
    <ligand>
        <name>substrate</name>
    </ligand>
</feature>
<feature type="binding site" evidence="1">
    <location>
        <position position="266"/>
    </location>
    <ligand>
        <name>Mg(2+)</name>
        <dbReference type="ChEBI" id="CHEBI:18420"/>
        <label>2</label>
    </ligand>
</feature>
<feature type="binding site" evidence="1">
    <location>
        <begin position="310"/>
        <end position="312"/>
    </location>
    <ligand>
        <name>substrate</name>
    </ligand>
</feature>
<feature type="binding site" evidence="1">
    <location>
        <position position="488"/>
    </location>
    <ligand>
        <name>ATP</name>
        <dbReference type="ChEBI" id="CHEBI:30616"/>
    </ligand>
</feature>
<feature type="binding site" evidence="1">
    <location>
        <position position="525"/>
    </location>
    <ligand>
        <name>ATP</name>
        <dbReference type="ChEBI" id="CHEBI:30616"/>
    </ligand>
</feature>
<feature type="binding site" evidence="1">
    <location>
        <position position="526"/>
    </location>
    <ligand>
        <name>Mg(2+)</name>
        <dbReference type="ChEBI" id="CHEBI:18420"/>
        <label>1</label>
    </ligand>
</feature>
<feature type="binding site" evidence="1">
    <location>
        <position position="528"/>
    </location>
    <ligand>
        <name>substrate</name>
    </ligand>
</feature>
<keyword id="KW-0067">ATP-binding</keyword>
<keyword id="KW-0963">Cytoplasm</keyword>
<keyword id="KW-0436">Ligase</keyword>
<keyword id="KW-0460">Magnesium</keyword>
<keyword id="KW-0479">Metal-binding</keyword>
<keyword id="KW-0547">Nucleotide-binding</keyword>
<keyword id="KW-0658">Purine biosynthesis</keyword>
<keyword id="KW-1185">Reference proteome</keyword>
<proteinExistence type="inferred from homology"/>
<comment type="function">
    <text evidence="1">Part of the phosphoribosylformylglycinamidine synthase complex involved in the purines biosynthetic pathway. Catalyzes the ATP-dependent conversion of formylglycinamide ribonucleotide (FGAR) and glutamine to yield formylglycinamidine ribonucleotide (FGAM) and glutamate. The FGAM synthase complex is composed of three subunits. PurQ produces an ammonia molecule by converting glutamine to glutamate. PurL transfers the ammonia molecule to FGAR to form FGAM in an ATP-dependent manner. PurS interacts with PurQ and PurL and is thought to assist in the transfer of the ammonia molecule from PurQ to PurL.</text>
</comment>
<comment type="catalytic activity">
    <reaction evidence="1">
        <text>N(2)-formyl-N(1)-(5-phospho-beta-D-ribosyl)glycinamide + L-glutamine + ATP + H2O = 2-formamido-N(1)-(5-O-phospho-beta-D-ribosyl)acetamidine + L-glutamate + ADP + phosphate + H(+)</text>
        <dbReference type="Rhea" id="RHEA:17129"/>
        <dbReference type="ChEBI" id="CHEBI:15377"/>
        <dbReference type="ChEBI" id="CHEBI:15378"/>
        <dbReference type="ChEBI" id="CHEBI:29985"/>
        <dbReference type="ChEBI" id="CHEBI:30616"/>
        <dbReference type="ChEBI" id="CHEBI:43474"/>
        <dbReference type="ChEBI" id="CHEBI:58359"/>
        <dbReference type="ChEBI" id="CHEBI:147286"/>
        <dbReference type="ChEBI" id="CHEBI:147287"/>
        <dbReference type="ChEBI" id="CHEBI:456216"/>
        <dbReference type="EC" id="6.3.5.3"/>
    </reaction>
</comment>
<comment type="pathway">
    <text evidence="1">Purine metabolism; IMP biosynthesis via de novo pathway; 5-amino-1-(5-phospho-D-ribosyl)imidazole from N(2)-formyl-N(1)-(5-phospho-D-ribosyl)glycinamide: step 1/2.</text>
</comment>
<comment type="subunit">
    <text evidence="1">Monomer. Part of the FGAM synthase complex composed of 1 PurL, 1 PurQ and 2 PurS subunits.</text>
</comment>
<comment type="subcellular location">
    <subcellularLocation>
        <location evidence="1">Cytoplasm</location>
    </subcellularLocation>
</comment>
<comment type="similarity">
    <text evidence="1">Belongs to the FGAMS family.</text>
</comment>
<protein>
    <recommendedName>
        <fullName evidence="1">Phosphoribosylformylglycinamidine synthase subunit PurL</fullName>
        <shortName evidence="1">FGAM synthase</shortName>
        <ecNumber evidence="1">6.3.5.3</ecNumber>
    </recommendedName>
    <alternativeName>
        <fullName evidence="1">Formylglycinamide ribonucleotide amidotransferase subunit II</fullName>
        <shortName evidence="1">FGAR amidotransferase II</shortName>
        <shortName evidence="1">FGAR-AT II</shortName>
    </alternativeName>
    <alternativeName>
        <fullName evidence="1">Glutamine amidotransferase PurL</fullName>
    </alternativeName>
    <alternativeName>
        <fullName evidence="1">Phosphoribosylformylglycinamidine synthase subunit II</fullName>
    </alternativeName>
</protein>
<dbReference type="EC" id="6.3.5.3" evidence="1"/>
<dbReference type="EMBL" id="CP000143">
    <property type="protein sequence ID" value="ABA79111.2"/>
    <property type="molecule type" value="Genomic_DNA"/>
</dbReference>
<dbReference type="RefSeq" id="WP_023003631.1">
    <property type="nucleotide sequence ID" value="NC_007493.2"/>
</dbReference>
<dbReference type="RefSeq" id="YP_353012.2">
    <property type="nucleotide sequence ID" value="NC_007493.2"/>
</dbReference>
<dbReference type="SMR" id="Q3J273"/>
<dbReference type="STRING" id="272943.RSP_2951"/>
<dbReference type="EnsemblBacteria" id="ABA79111">
    <property type="protein sequence ID" value="ABA79111"/>
    <property type="gene ID" value="RSP_2951"/>
</dbReference>
<dbReference type="GeneID" id="3720403"/>
<dbReference type="KEGG" id="rsp:RSP_2951"/>
<dbReference type="PATRIC" id="fig|272943.9.peg.1889"/>
<dbReference type="eggNOG" id="COG0046">
    <property type="taxonomic scope" value="Bacteria"/>
</dbReference>
<dbReference type="OrthoDB" id="9804441at2"/>
<dbReference type="UniPathway" id="UPA00074">
    <property type="reaction ID" value="UER00128"/>
</dbReference>
<dbReference type="Proteomes" id="UP000002703">
    <property type="component" value="Chromosome 1"/>
</dbReference>
<dbReference type="GO" id="GO:0005737">
    <property type="term" value="C:cytoplasm"/>
    <property type="evidence" value="ECO:0007669"/>
    <property type="project" value="UniProtKB-SubCell"/>
</dbReference>
<dbReference type="GO" id="GO:0005524">
    <property type="term" value="F:ATP binding"/>
    <property type="evidence" value="ECO:0007669"/>
    <property type="project" value="UniProtKB-UniRule"/>
</dbReference>
<dbReference type="GO" id="GO:0000287">
    <property type="term" value="F:magnesium ion binding"/>
    <property type="evidence" value="ECO:0007669"/>
    <property type="project" value="UniProtKB-UniRule"/>
</dbReference>
<dbReference type="GO" id="GO:0004642">
    <property type="term" value="F:phosphoribosylformylglycinamidine synthase activity"/>
    <property type="evidence" value="ECO:0007669"/>
    <property type="project" value="UniProtKB-UniRule"/>
</dbReference>
<dbReference type="GO" id="GO:0006189">
    <property type="term" value="P:'de novo' IMP biosynthetic process"/>
    <property type="evidence" value="ECO:0007669"/>
    <property type="project" value="UniProtKB-UniRule"/>
</dbReference>
<dbReference type="CDD" id="cd02203">
    <property type="entry name" value="PurL_repeat1"/>
    <property type="match status" value="1"/>
</dbReference>
<dbReference type="CDD" id="cd02204">
    <property type="entry name" value="PurL_repeat2"/>
    <property type="match status" value="1"/>
</dbReference>
<dbReference type="FunFam" id="3.30.1330.10:FF:000004">
    <property type="entry name" value="Phosphoribosylformylglycinamidine synthase subunit PurL"/>
    <property type="match status" value="1"/>
</dbReference>
<dbReference type="Gene3D" id="3.90.650.10">
    <property type="entry name" value="PurM-like C-terminal domain"/>
    <property type="match status" value="2"/>
</dbReference>
<dbReference type="Gene3D" id="3.30.1330.10">
    <property type="entry name" value="PurM-like, N-terminal domain"/>
    <property type="match status" value="2"/>
</dbReference>
<dbReference type="HAMAP" id="MF_00420">
    <property type="entry name" value="PurL_2"/>
    <property type="match status" value="1"/>
</dbReference>
<dbReference type="InterPro" id="IPR010074">
    <property type="entry name" value="PRibForGlyAmidine_synth_PurL"/>
</dbReference>
<dbReference type="InterPro" id="IPR041609">
    <property type="entry name" value="PurL_linker"/>
</dbReference>
<dbReference type="InterPro" id="IPR010918">
    <property type="entry name" value="PurM-like_C_dom"/>
</dbReference>
<dbReference type="InterPro" id="IPR036676">
    <property type="entry name" value="PurM-like_C_sf"/>
</dbReference>
<dbReference type="InterPro" id="IPR016188">
    <property type="entry name" value="PurM-like_N"/>
</dbReference>
<dbReference type="InterPro" id="IPR036921">
    <property type="entry name" value="PurM-like_N_sf"/>
</dbReference>
<dbReference type="NCBIfam" id="TIGR01736">
    <property type="entry name" value="FGAM_synth_II"/>
    <property type="match status" value="1"/>
</dbReference>
<dbReference type="NCBIfam" id="NF002290">
    <property type="entry name" value="PRK01213.1"/>
    <property type="match status" value="1"/>
</dbReference>
<dbReference type="PANTHER" id="PTHR43555">
    <property type="entry name" value="PHOSPHORIBOSYLFORMYLGLYCINAMIDINE SYNTHASE SUBUNIT PURL"/>
    <property type="match status" value="1"/>
</dbReference>
<dbReference type="PANTHER" id="PTHR43555:SF1">
    <property type="entry name" value="PHOSPHORIBOSYLFORMYLGLYCINAMIDINE SYNTHASE SUBUNIT PURL"/>
    <property type="match status" value="1"/>
</dbReference>
<dbReference type="Pfam" id="PF00586">
    <property type="entry name" value="AIRS"/>
    <property type="match status" value="2"/>
</dbReference>
<dbReference type="Pfam" id="PF02769">
    <property type="entry name" value="AIRS_C"/>
    <property type="match status" value="2"/>
</dbReference>
<dbReference type="Pfam" id="PF18072">
    <property type="entry name" value="FGAR-AT_linker"/>
    <property type="match status" value="1"/>
</dbReference>
<dbReference type="PIRSF" id="PIRSF001587">
    <property type="entry name" value="FGAM_synthase_II"/>
    <property type="match status" value="1"/>
</dbReference>
<dbReference type="SUPFAM" id="SSF56042">
    <property type="entry name" value="PurM C-terminal domain-like"/>
    <property type="match status" value="2"/>
</dbReference>
<dbReference type="SUPFAM" id="SSF55326">
    <property type="entry name" value="PurM N-terminal domain-like"/>
    <property type="match status" value="2"/>
</dbReference>
<reference key="1">
    <citation type="submission" date="2005-09" db="EMBL/GenBank/DDBJ databases">
        <title>Complete sequence of chromosome 1 of Rhodobacter sphaeroides 2.4.1.</title>
        <authorList>
            <person name="Copeland A."/>
            <person name="Lucas S."/>
            <person name="Lapidus A."/>
            <person name="Barry K."/>
            <person name="Detter J.C."/>
            <person name="Glavina T."/>
            <person name="Hammon N."/>
            <person name="Israni S."/>
            <person name="Pitluck S."/>
            <person name="Richardson P."/>
            <person name="Mackenzie C."/>
            <person name="Choudhary M."/>
            <person name="Larimer F."/>
            <person name="Hauser L.J."/>
            <person name="Land M."/>
            <person name="Donohue T.J."/>
            <person name="Kaplan S."/>
        </authorList>
    </citation>
    <scope>NUCLEOTIDE SEQUENCE [LARGE SCALE GENOMIC DNA]</scope>
    <source>
        <strain>ATCC 17023 / DSM 158 / JCM 6121 / CCUG 31486 / LMG 2827 / NBRC 12203 / NCIMB 8253 / ATH 2.4.1.</strain>
    </source>
</reference>
<gene>
    <name evidence="1" type="primary">purL</name>
    <name type="ordered locus">RHOS4_15430</name>
    <name type="ordered locus">RSP_2951</name>
</gene>